<reference key="1">
    <citation type="journal article" date="2009" name="PLoS ONE">
        <title>Complete genome sequence of the aerobic CO-oxidizing thermophile Thermomicrobium roseum.</title>
        <authorList>
            <person name="Wu D."/>
            <person name="Raymond J."/>
            <person name="Wu M."/>
            <person name="Chatterji S."/>
            <person name="Ren Q."/>
            <person name="Graham J.E."/>
            <person name="Bryant D.A."/>
            <person name="Robb F."/>
            <person name="Colman A."/>
            <person name="Tallon L.J."/>
            <person name="Badger J.H."/>
            <person name="Madupu R."/>
            <person name="Ward N.L."/>
            <person name="Eisen J.A."/>
        </authorList>
    </citation>
    <scope>NUCLEOTIDE SEQUENCE [LARGE SCALE GENOMIC DNA]</scope>
    <source>
        <strain>ATCC 27502 / DSM 5159 / P-2</strain>
    </source>
</reference>
<protein>
    <recommendedName>
        <fullName evidence="1">1-deoxy-D-xylulose-5-phosphate synthase</fullName>
        <ecNumber evidence="1">2.2.1.7</ecNumber>
    </recommendedName>
    <alternativeName>
        <fullName evidence="1">1-deoxyxylulose-5-phosphate synthase</fullName>
        <shortName evidence="1">DXP synthase</shortName>
        <shortName evidence="1">DXPS</shortName>
    </alternativeName>
</protein>
<name>DXS_THERP</name>
<evidence type="ECO:0000255" key="1">
    <source>
        <dbReference type="HAMAP-Rule" id="MF_00315"/>
    </source>
</evidence>
<gene>
    <name evidence="1" type="primary">dxs</name>
    <name type="ordered locus">trd_1276</name>
</gene>
<feature type="chain" id="PRO_1000132945" description="1-deoxy-D-xylulose-5-phosphate synthase">
    <location>
        <begin position="1"/>
        <end position="629"/>
    </location>
</feature>
<feature type="binding site" evidence="1">
    <location>
        <position position="73"/>
    </location>
    <ligand>
        <name>thiamine diphosphate</name>
        <dbReference type="ChEBI" id="CHEBI:58937"/>
    </ligand>
</feature>
<feature type="binding site" evidence="1">
    <location>
        <begin position="114"/>
        <end position="116"/>
    </location>
    <ligand>
        <name>thiamine diphosphate</name>
        <dbReference type="ChEBI" id="CHEBI:58937"/>
    </ligand>
</feature>
<feature type="binding site" evidence="1">
    <location>
        <position position="145"/>
    </location>
    <ligand>
        <name>Mg(2+)</name>
        <dbReference type="ChEBI" id="CHEBI:18420"/>
    </ligand>
</feature>
<feature type="binding site" evidence="1">
    <location>
        <begin position="146"/>
        <end position="147"/>
    </location>
    <ligand>
        <name>thiamine diphosphate</name>
        <dbReference type="ChEBI" id="CHEBI:58937"/>
    </ligand>
</feature>
<feature type="binding site" evidence="1">
    <location>
        <position position="174"/>
    </location>
    <ligand>
        <name>Mg(2+)</name>
        <dbReference type="ChEBI" id="CHEBI:18420"/>
    </ligand>
</feature>
<feature type="binding site" evidence="1">
    <location>
        <position position="174"/>
    </location>
    <ligand>
        <name>thiamine diphosphate</name>
        <dbReference type="ChEBI" id="CHEBI:58937"/>
    </ligand>
</feature>
<feature type="binding site" evidence="1">
    <location>
        <position position="284"/>
    </location>
    <ligand>
        <name>thiamine diphosphate</name>
        <dbReference type="ChEBI" id="CHEBI:58937"/>
    </ligand>
</feature>
<feature type="binding site" evidence="1">
    <location>
        <position position="360"/>
    </location>
    <ligand>
        <name>thiamine diphosphate</name>
        <dbReference type="ChEBI" id="CHEBI:58937"/>
    </ligand>
</feature>
<accession>B9L1L6</accession>
<keyword id="KW-0414">Isoprene biosynthesis</keyword>
<keyword id="KW-0460">Magnesium</keyword>
<keyword id="KW-0479">Metal-binding</keyword>
<keyword id="KW-1185">Reference proteome</keyword>
<keyword id="KW-0784">Thiamine biosynthesis</keyword>
<keyword id="KW-0786">Thiamine pyrophosphate</keyword>
<keyword id="KW-0808">Transferase</keyword>
<sequence length="629" mass="68649">MYLERIDSPQDLKRLSVPELEKLAEEIREAIIEVVLGKTGGHFAPNLGTVELTLALHYVFDSPRDKIVWDVGHQAYPHKLVTGRRDRFHTIRQEGGLSGFLQREESPHDHFGAGHASTSISAALGMAVAAKLRGDRYHTIAVIGDGALTGGMAYEALNHAGALQVPLIVVLNDNEMSIAPNVGALARYLTRVRTDTRYRQAKVEIERLLRRLPQGERLVELSHRFLDGLKEVVYRTMIWEELGFTYIGPIDGHNLRELIETFQLVKTFDSPVFVHVLTVKGKGYQPAEDDPFKHHSAAVKVPGAPPTPPRYQDVFGQTLVELAAKNDRIVAITAAMPDGTGLLPFAAAYPDRFFDVGIAEQHAVTFAAGLATQGLRPVCAIYSTFLQRAYDQVIHDVCIQKLPVVFAMDRAGLVGEDGRTHHGVFDVAYLRCLPNMVLMAPKDEDELRHMLATALAYEEGPIALRYPRGSGVGVPMLGEPRVLPIGRAELLREGSDVAIVALGATVLPAERAADILAERGIRATVINARFVKPLDRSLILDAARECGCLVTVEEAQLAGGFGSAVLETLADAGLLIPVLRLGLADRFFDHASQASLRRQAGIDAESIASRTLAFLATHGRIETGAISDR</sequence>
<proteinExistence type="inferred from homology"/>
<dbReference type="EC" id="2.2.1.7" evidence="1"/>
<dbReference type="EMBL" id="CP001275">
    <property type="protein sequence ID" value="ACM05181.1"/>
    <property type="molecule type" value="Genomic_DNA"/>
</dbReference>
<dbReference type="RefSeq" id="WP_015922227.1">
    <property type="nucleotide sequence ID" value="NC_011959.1"/>
</dbReference>
<dbReference type="SMR" id="B9L1L6"/>
<dbReference type="STRING" id="309801.trd_1276"/>
<dbReference type="KEGG" id="tro:trd_1276"/>
<dbReference type="eggNOG" id="COG1154">
    <property type="taxonomic scope" value="Bacteria"/>
</dbReference>
<dbReference type="HOGENOM" id="CLU_009227_1_4_0"/>
<dbReference type="OrthoDB" id="9803371at2"/>
<dbReference type="UniPathway" id="UPA00064">
    <property type="reaction ID" value="UER00091"/>
</dbReference>
<dbReference type="Proteomes" id="UP000000447">
    <property type="component" value="Chromosome"/>
</dbReference>
<dbReference type="GO" id="GO:0005829">
    <property type="term" value="C:cytosol"/>
    <property type="evidence" value="ECO:0007669"/>
    <property type="project" value="TreeGrafter"/>
</dbReference>
<dbReference type="GO" id="GO:0008661">
    <property type="term" value="F:1-deoxy-D-xylulose-5-phosphate synthase activity"/>
    <property type="evidence" value="ECO:0007669"/>
    <property type="project" value="UniProtKB-UniRule"/>
</dbReference>
<dbReference type="GO" id="GO:0000287">
    <property type="term" value="F:magnesium ion binding"/>
    <property type="evidence" value="ECO:0007669"/>
    <property type="project" value="UniProtKB-UniRule"/>
</dbReference>
<dbReference type="GO" id="GO:0030976">
    <property type="term" value="F:thiamine pyrophosphate binding"/>
    <property type="evidence" value="ECO:0007669"/>
    <property type="project" value="UniProtKB-UniRule"/>
</dbReference>
<dbReference type="GO" id="GO:0052865">
    <property type="term" value="P:1-deoxy-D-xylulose 5-phosphate biosynthetic process"/>
    <property type="evidence" value="ECO:0007669"/>
    <property type="project" value="UniProtKB-UniPathway"/>
</dbReference>
<dbReference type="GO" id="GO:0019288">
    <property type="term" value="P:isopentenyl diphosphate biosynthetic process, methylerythritol 4-phosphate pathway"/>
    <property type="evidence" value="ECO:0007669"/>
    <property type="project" value="TreeGrafter"/>
</dbReference>
<dbReference type="GO" id="GO:0016114">
    <property type="term" value="P:terpenoid biosynthetic process"/>
    <property type="evidence" value="ECO:0007669"/>
    <property type="project" value="UniProtKB-UniRule"/>
</dbReference>
<dbReference type="GO" id="GO:0009228">
    <property type="term" value="P:thiamine biosynthetic process"/>
    <property type="evidence" value="ECO:0007669"/>
    <property type="project" value="UniProtKB-UniRule"/>
</dbReference>
<dbReference type="CDD" id="cd02007">
    <property type="entry name" value="TPP_DXS"/>
    <property type="match status" value="1"/>
</dbReference>
<dbReference type="CDD" id="cd07033">
    <property type="entry name" value="TPP_PYR_DXS_TK_like"/>
    <property type="match status" value="1"/>
</dbReference>
<dbReference type="FunFam" id="3.40.50.920:FF:000002">
    <property type="entry name" value="1-deoxy-D-xylulose-5-phosphate synthase"/>
    <property type="match status" value="1"/>
</dbReference>
<dbReference type="FunFam" id="3.40.50.970:FF:000005">
    <property type="entry name" value="1-deoxy-D-xylulose-5-phosphate synthase"/>
    <property type="match status" value="1"/>
</dbReference>
<dbReference type="Gene3D" id="3.40.50.920">
    <property type="match status" value="1"/>
</dbReference>
<dbReference type="Gene3D" id="3.40.50.970">
    <property type="match status" value="2"/>
</dbReference>
<dbReference type="HAMAP" id="MF_00315">
    <property type="entry name" value="DXP_synth"/>
    <property type="match status" value="1"/>
</dbReference>
<dbReference type="InterPro" id="IPR005477">
    <property type="entry name" value="Dxylulose-5-P_synthase"/>
</dbReference>
<dbReference type="InterPro" id="IPR029061">
    <property type="entry name" value="THDP-binding"/>
</dbReference>
<dbReference type="InterPro" id="IPR009014">
    <property type="entry name" value="Transketo_C/PFOR_II"/>
</dbReference>
<dbReference type="InterPro" id="IPR005475">
    <property type="entry name" value="Transketolase-like_Pyr-bd"/>
</dbReference>
<dbReference type="InterPro" id="IPR033248">
    <property type="entry name" value="Transketolase_C"/>
</dbReference>
<dbReference type="InterPro" id="IPR049557">
    <property type="entry name" value="Transketolase_CS"/>
</dbReference>
<dbReference type="NCBIfam" id="TIGR00204">
    <property type="entry name" value="dxs"/>
    <property type="match status" value="1"/>
</dbReference>
<dbReference type="NCBIfam" id="NF003933">
    <property type="entry name" value="PRK05444.2-2"/>
    <property type="match status" value="1"/>
</dbReference>
<dbReference type="PANTHER" id="PTHR43322">
    <property type="entry name" value="1-D-DEOXYXYLULOSE 5-PHOSPHATE SYNTHASE-RELATED"/>
    <property type="match status" value="1"/>
</dbReference>
<dbReference type="PANTHER" id="PTHR43322:SF5">
    <property type="entry name" value="1-DEOXY-D-XYLULOSE-5-PHOSPHATE SYNTHASE, CHLOROPLASTIC"/>
    <property type="match status" value="1"/>
</dbReference>
<dbReference type="Pfam" id="PF13292">
    <property type="entry name" value="DXP_synthase_N"/>
    <property type="match status" value="1"/>
</dbReference>
<dbReference type="Pfam" id="PF02779">
    <property type="entry name" value="Transket_pyr"/>
    <property type="match status" value="1"/>
</dbReference>
<dbReference type="Pfam" id="PF02780">
    <property type="entry name" value="Transketolase_C"/>
    <property type="match status" value="1"/>
</dbReference>
<dbReference type="SMART" id="SM00861">
    <property type="entry name" value="Transket_pyr"/>
    <property type="match status" value="1"/>
</dbReference>
<dbReference type="SUPFAM" id="SSF52518">
    <property type="entry name" value="Thiamin diphosphate-binding fold (THDP-binding)"/>
    <property type="match status" value="2"/>
</dbReference>
<dbReference type="SUPFAM" id="SSF52922">
    <property type="entry name" value="TK C-terminal domain-like"/>
    <property type="match status" value="1"/>
</dbReference>
<dbReference type="PROSITE" id="PS00801">
    <property type="entry name" value="TRANSKETOLASE_1"/>
    <property type="match status" value="1"/>
</dbReference>
<organism>
    <name type="scientific">Thermomicrobium roseum (strain ATCC 27502 / DSM 5159 / P-2)</name>
    <dbReference type="NCBI Taxonomy" id="309801"/>
    <lineage>
        <taxon>Bacteria</taxon>
        <taxon>Pseudomonadati</taxon>
        <taxon>Thermomicrobiota</taxon>
        <taxon>Thermomicrobia</taxon>
        <taxon>Thermomicrobiales</taxon>
        <taxon>Thermomicrobiaceae</taxon>
        <taxon>Thermomicrobium</taxon>
    </lineage>
</organism>
<comment type="function">
    <text evidence="1">Catalyzes the acyloin condensation reaction between C atoms 2 and 3 of pyruvate and glyceraldehyde 3-phosphate to yield 1-deoxy-D-xylulose-5-phosphate (DXP).</text>
</comment>
<comment type="catalytic activity">
    <reaction evidence="1">
        <text>D-glyceraldehyde 3-phosphate + pyruvate + H(+) = 1-deoxy-D-xylulose 5-phosphate + CO2</text>
        <dbReference type="Rhea" id="RHEA:12605"/>
        <dbReference type="ChEBI" id="CHEBI:15361"/>
        <dbReference type="ChEBI" id="CHEBI:15378"/>
        <dbReference type="ChEBI" id="CHEBI:16526"/>
        <dbReference type="ChEBI" id="CHEBI:57792"/>
        <dbReference type="ChEBI" id="CHEBI:59776"/>
        <dbReference type="EC" id="2.2.1.7"/>
    </reaction>
</comment>
<comment type="cofactor">
    <cofactor evidence="1">
        <name>Mg(2+)</name>
        <dbReference type="ChEBI" id="CHEBI:18420"/>
    </cofactor>
    <text evidence="1">Binds 1 Mg(2+) ion per subunit.</text>
</comment>
<comment type="cofactor">
    <cofactor evidence="1">
        <name>thiamine diphosphate</name>
        <dbReference type="ChEBI" id="CHEBI:58937"/>
    </cofactor>
    <text evidence="1">Binds 1 thiamine pyrophosphate per subunit.</text>
</comment>
<comment type="pathway">
    <text evidence="1">Metabolic intermediate biosynthesis; 1-deoxy-D-xylulose 5-phosphate biosynthesis; 1-deoxy-D-xylulose 5-phosphate from D-glyceraldehyde 3-phosphate and pyruvate: step 1/1.</text>
</comment>
<comment type="subunit">
    <text evidence="1">Homodimer.</text>
</comment>
<comment type="similarity">
    <text evidence="1">Belongs to the transketolase family. DXPS subfamily.</text>
</comment>